<dbReference type="EC" id="2.3.1.191" evidence="1"/>
<dbReference type="EMBL" id="BX569691">
    <property type="protein sequence ID" value="CAE07298.1"/>
    <property type="molecule type" value="Genomic_DNA"/>
</dbReference>
<dbReference type="RefSeq" id="WP_011127648.1">
    <property type="nucleotide sequence ID" value="NC_005070.1"/>
</dbReference>
<dbReference type="SMR" id="Q7U841"/>
<dbReference type="STRING" id="84588.SYNW0783"/>
<dbReference type="KEGG" id="syw:SYNW0783"/>
<dbReference type="eggNOG" id="COG1044">
    <property type="taxonomic scope" value="Bacteria"/>
</dbReference>
<dbReference type="HOGENOM" id="CLU_049865_0_0_3"/>
<dbReference type="UniPathway" id="UPA00973"/>
<dbReference type="Proteomes" id="UP000001422">
    <property type="component" value="Chromosome"/>
</dbReference>
<dbReference type="GO" id="GO:0031470">
    <property type="term" value="C:carboxysome"/>
    <property type="evidence" value="ECO:0007669"/>
    <property type="project" value="UniProtKB-ARBA"/>
</dbReference>
<dbReference type="GO" id="GO:0016020">
    <property type="term" value="C:membrane"/>
    <property type="evidence" value="ECO:0007669"/>
    <property type="project" value="GOC"/>
</dbReference>
<dbReference type="GO" id="GO:0016410">
    <property type="term" value="F:N-acyltransferase activity"/>
    <property type="evidence" value="ECO:0007669"/>
    <property type="project" value="InterPro"/>
</dbReference>
<dbReference type="GO" id="GO:0043886">
    <property type="term" value="F:structural constituent of carboxysome shell"/>
    <property type="evidence" value="ECO:0007669"/>
    <property type="project" value="UniProtKB-ARBA"/>
</dbReference>
<dbReference type="GO" id="GO:0009245">
    <property type="term" value="P:lipid A biosynthetic process"/>
    <property type="evidence" value="ECO:0007669"/>
    <property type="project" value="UniProtKB-UniRule"/>
</dbReference>
<dbReference type="CDD" id="cd03352">
    <property type="entry name" value="LbH_LpxD"/>
    <property type="match status" value="1"/>
</dbReference>
<dbReference type="Gene3D" id="2.160.10.10">
    <property type="entry name" value="Hexapeptide repeat proteins"/>
    <property type="match status" value="1"/>
</dbReference>
<dbReference type="Gene3D" id="3.40.1390.10">
    <property type="entry name" value="MurE/MurF, N-terminal domain"/>
    <property type="match status" value="1"/>
</dbReference>
<dbReference type="HAMAP" id="MF_00523">
    <property type="entry name" value="LpxD"/>
    <property type="match status" value="1"/>
</dbReference>
<dbReference type="InterPro" id="IPR001451">
    <property type="entry name" value="Hexapep"/>
</dbReference>
<dbReference type="InterPro" id="IPR007691">
    <property type="entry name" value="LpxD"/>
</dbReference>
<dbReference type="InterPro" id="IPR011004">
    <property type="entry name" value="Trimer_LpxA-like_sf"/>
</dbReference>
<dbReference type="InterPro" id="IPR020573">
    <property type="entry name" value="UDP_GlcNAc_AcTrfase_non-rep"/>
</dbReference>
<dbReference type="NCBIfam" id="TIGR01853">
    <property type="entry name" value="lipid_A_lpxD"/>
    <property type="match status" value="1"/>
</dbReference>
<dbReference type="NCBIfam" id="NF002060">
    <property type="entry name" value="PRK00892.1"/>
    <property type="match status" value="1"/>
</dbReference>
<dbReference type="PANTHER" id="PTHR43378">
    <property type="entry name" value="UDP-3-O-ACYLGLUCOSAMINE N-ACYLTRANSFERASE"/>
    <property type="match status" value="1"/>
</dbReference>
<dbReference type="PANTHER" id="PTHR43378:SF2">
    <property type="entry name" value="UDP-3-O-ACYLGLUCOSAMINE N-ACYLTRANSFERASE 1, MITOCHONDRIAL-RELATED"/>
    <property type="match status" value="1"/>
</dbReference>
<dbReference type="Pfam" id="PF00132">
    <property type="entry name" value="Hexapep"/>
    <property type="match status" value="1"/>
</dbReference>
<dbReference type="Pfam" id="PF04613">
    <property type="entry name" value="LpxD"/>
    <property type="match status" value="1"/>
</dbReference>
<dbReference type="SUPFAM" id="SSF51161">
    <property type="entry name" value="Trimeric LpxA-like enzymes"/>
    <property type="match status" value="1"/>
</dbReference>
<dbReference type="PROSITE" id="PS00101">
    <property type="entry name" value="HEXAPEP_TRANSFERASES"/>
    <property type="match status" value="1"/>
</dbReference>
<proteinExistence type="inferred from homology"/>
<sequence length="347" mass="35810">MRFSSLIKALQAGESGLRWSQLGQDPDLSGAAALDQALGDQLSFLEAGNVLSASLSDSAVGALLLPDQQDLIDLASQRGIAFAVVSDPRLAFAEALDCLHPRQRPQADIHHTAVIDERAVVGPGTAVAARVCIGAGSRVGADCIVHPGVVIYDDVVIADGCELHANAVLHPGSRLGRRCVVNSNAVVGSEGFGFVPTAKGWRKMPQTGQVVLEDGVEVGCGSTIDRPSVGETRIGAGTKIDNLVQIGHGVSTGRGCAFAAQVGIAGGARIGHGVILAGQVGVANRAVVGDRVMASSKAGIHNDVDAGAVVSGYPAIPHRLWLRCSAAFSKLPELARTVRELKRNTPQ</sequence>
<keyword id="KW-0012">Acyltransferase</keyword>
<keyword id="KW-0441">Lipid A biosynthesis</keyword>
<keyword id="KW-0444">Lipid biosynthesis</keyword>
<keyword id="KW-0443">Lipid metabolism</keyword>
<keyword id="KW-0677">Repeat</keyword>
<keyword id="KW-0808">Transferase</keyword>
<name>LPXD_PARMW</name>
<accession>Q7U841</accession>
<organism>
    <name type="scientific">Parasynechococcus marenigrum (strain WH8102)</name>
    <dbReference type="NCBI Taxonomy" id="84588"/>
    <lineage>
        <taxon>Bacteria</taxon>
        <taxon>Bacillati</taxon>
        <taxon>Cyanobacteriota</taxon>
        <taxon>Cyanophyceae</taxon>
        <taxon>Synechococcales</taxon>
        <taxon>Prochlorococcaceae</taxon>
        <taxon>Parasynechococcus</taxon>
        <taxon>Parasynechococcus marenigrum</taxon>
    </lineage>
</organism>
<gene>
    <name evidence="1" type="primary">lpxD</name>
    <name type="ordered locus">SYNW0783</name>
</gene>
<evidence type="ECO:0000255" key="1">
    <source>
        <dbReference type="HAMAP-Rule" id="MF_00523"/>
    </source>
</evidence>
<reference key="1">
    <citation type="journal article" date="2003" name="Nature">
        <title>The genome of a motile marine Synechococcus.</title>
        <authorList>
            <person name="Palenik B."/>
            <person name="Brahamsha B."/>
            <person name="Larimer F.W."/>
            <person name="Land M.L."/>
            <person name="Hauser L."/>
            <person name="Chain P."/>
            <person name="Lamerdin J.E."/>
            <person name="Regala W."/>
            <person name="Allen E.E."/>
            <person name="McCarren J."/>
            <person name="Paulsen I.T."/>
            <person name="Dufresne A."/>
            <person name="Partensky F."/>
            <person name="Webb E.A."/>
            <person name="Waterbury J."/>
        </authorList>
    </citation>
    <scope>NUCLEOTIDE SEQUENCE [LARGE SCALE GENOMIC DNA]</scope>
    <source>
        <strain>WH8102</strain>
    </source>
</reference>
<feature type="chain" id="PRO_0000264448" description="UDP-3-O-acylglucosamine N-acyltransferase">
    <location>
        <begin position="1"/>
        <end position="347"/>
    </location>
</feature>
<feature type="active site" description="Proton acceptor" evidence="1">
    <location>
        <position position="248"/>
    </location>
</feature>
<comment type="function">
    <text evidence="1">Catalyzes the N-acylation of UDP-3-O-acylglucosamine using 3-hydroxyacyl-ACP as the acyl donor. Is involved in the biosynthesis of lipid A, a phosphorylated glycolipid that anchors the lipopolysaccharide to the outer membrane of the cell.</text>
</comment>
<comment type="catalytic activity">
    <reaction evidence="1">
        <text>a UDP-3-O-[(3R)-3-hydroxyacyl]-alpha-D-glucosamine + a (3R)-hydroxyacyl-[ACP] = a UDP-2-N,3-O-bis[(3R)-3-hydroxyacyl]-alpha-D-glucosamine + holo-[ACP] + H(+)</text>
        <dbReference type="Rhea" id="RHEA:53836"/>
        <dbReference type="Rhea" id="RHEA-COMP:9685"/>
        <dbReference type="Rhea" id="RHEA-COMP:9945"/>
        <dbReference type="ChEBI" id="CHEBI:15378"/>
        <dbReference type="ChEBI" id="CHEBI:64479"/>
        <dbReference type="ChEBI" id="CHEBI:78827"/>
        <dbReference type="ChEBI" id="CHEBI:137740"/>
        <dbReference type="ChEBI" id="CHEBI:137748"/>
        <dbReference type="EC" id="2.3.1.191"/>
    </reaction>
</comment>
<comment type="pathway">
    <text evidence="1">Bacterial outer membrane biogenesis; LPS lipid A biosynthesis.</text>
</comment>
<comment type="subunit">
    <text evidence="1">Homotrimer.</text>
</comment>
<comment type="similarity">
    <text evidence="1">Belongs to the transferase hexapeptide repeat family. LpxD subfamily.</text>
</comment>
<protein>
    <recommendedName>
        <fullName evidence="1">UDP-3-O-acylglucosamine N-acyltransferase</fullName>
        <ecNumber evidence="1">2.3.1.191</ecNumber>
    </recommendedName>
</protein>